<dbReference type="EMBL" id="AE005674">
    <property type="protein sequence ID" value="AAN44211.1"/>
    <property type="molecule type" value="Genomic_DNA"/>
</dbReference>
<dbReference type="EMBL" id="AE014073">
    <property type="protein sequence ID" value="AAP18037.1"/>
    <property type="molecule type" value="Genomic_DNA"/>
</dbReference>
<dbReference type="RefSeq" id="NP_708504.1">
    <property type="nucleotide sequence ID" value="NC_004337.2"/>
</dbReference>
<dbReference type="RefSeq" id="WP_000906486.1">
    <property type="nucleotide sequence ID" value="NZ_WPGW01000014.1"/>
</dbReference>
<dbReference type="SMR" id="P69918"/>
<dbReference type="STRING" id="198214.SF2719"/>
<dbReference type="PaxDb" id="198214-SF2719"/>
<dbReference type="GeneID" id="1027470"/>
<dbReference type="GeneID" id="98389839"/>
<dbReference type="KEGG" id="sfl:SF2719"/>
<dbReference type="KEGG" id="sfx:S2910"/>
<dbReference type="PATRIC" id="fig|198214.7.peg.3238"/>
<dbReference type="HOGENOM" id="CLU_164837_2_1_6"/>
<dbReference type="Proteomes" id="UP000001006">
    <property type="component" value="Chromosome"/>
</dbReference>
<dbReference type="Proteomes" id="UP000002673">
    <property type="component" value="Chromosome"/>
</dbReference>
<dbReference type="GO" id="GO:0005829">
    <property type="term" value="C:cytosol"/>
    <property type="evidence" value="ECO:0007669"/>
    <property type="project" value="TreeGrafter"/>
</dbReference>
<dbReference type="GO" id="GO:0048027">
    <property type="term" value="F:mRNA 5'-UTR binding"/>
    <property type="evidence" value="ECO:0007669"/>
    <property type="project" value="UniProtKB-UniRule"/>
</dbReference>
<dbReference type="GO" id="GO:0006402">
    <property type="term" value="P:mRNA catabolic process"/>
    <property type="evidence" value="ECO:0007669"/>
    <property type="project" value="InterPro"/>
</dbReference>
<dbReference type="GO" id="GO:0045947">
    <property type="term" value="P:negative regulation of translational initiation"/>
    <property type="evidence" value="ECO:0007669"/>
    <property type="project" value="UniProtKB-UniRule"/>
</dbReference>
<dbReference type="GO" id="GO:0045948">
    <property type="term" value="P:positive regulation of translational initiation"/>
    <property type="evidence" value="ECO:0007669"/>
    <property type="project" value="UniProtKB-UniRule"/>
</dbReference>
<dbReference type="GO" id="GO:0006109">
    <property type="term" value="P:regulation of carbohydrate metabolic process"/>
    <property type="evidence" value="ECO:0007669"/>
    <property type="project" value="UniProtKB-UniRule"/>
</dbReference>
<dbReference type="FunFam" id="2.60.40.4380:FF:000001">
    <property type="entry name" value="Translational regulator CsrA"/>
    <property type="match status" value="1"/>
</dbReference>
<dbReference type="Gene3D" id="2.60.40.4380">
    <property type="entry name" value="Translational regulator CsrA"/>
    <property type="match status" value="1"/>
</dbReference>
<dbReference type="HAMAP" id="MF_00167">
    <property type="entry name" value="CsrA"/>
    <property type="match status" value="1"/>
</dbReference>
<dbReference type="InterPro" id="IPR003751">
    <property type="entry name" value="CsrA"/>
</dbReference>
<dbReference type="InterPro" id="IPR036107">
    <property type="entry name" value="CsrA_sf"/>
</dbReference>
<dbReference type="NCBIfam" id="TIGR00202">
    <property type="entry name" value="csrA"/>
    <property type="match status" value="1"/>
</dbReference>
<dbReference type="NCBIfam" id="NF002469">
    <property type="entry name" value="PRK01712.1"/>
    <property type="match status" value="1"/>
</dbReference>
<dbReference type="PANTHER" id="PTHR34984">
    <property type="entry name" value="CARBON STORAGE REGULATOR"/>
    <property type="match status" value="1"/>
</dbReference>
<dbReference type="PANTHER" id="PTHR34984:SF1">
    <property type="entry name" value="CARBON STORAGE REGULATOR"/>
    <property type="match status" value="1"/>
</dbReference>
<dbReference type="Pfam" id="PF02599">
    <property type="entry name" value="CsrA"/>
    <property type="match status" value="1"/>
</dbReference>
<dbReference type="SUPFAM" id="SSF117130">
    <property type="entry name" value="CsrA-like"/>
    <property type="match status" value="1"/>
</dbReference>
<accession>P69918</accession>
<accession>P31803</accession>
<gene>
    <name evidence="1" type="primary">csrA</name>
    <name type="ordered locus">SF2719</name>
    <name type="ordered locus">S2910</name>
</gene>
<sequence>MLILTRRVGETLMIGDEVTVTVLGVKGNQVRIGVNAPKEVSVHREEIYQRIQAEKSQQSSY</sequence>
<keyword id="KW-0010">Activator</keyword>
<keyword id="KW-0963">Cytoplasm</keyword>
<keyword id="KW-1185">Reference proteome</keyword>
<keyword id="KW-0678">Repressor</keyword>
<keyword id="KW-0694">RNA-binding</keyword>
<keyword id="KW-0810">Translation regulation</keyword>
<proteinExistence type="inferred from homology"/>
<reference key="1">
    <citation type="journal article" date="2002" name="Nucleic Acids Res.">
        <title>Genome sequence of Shigella flexneri 2a: insights into pathogenicity through comparison with genomes of Escherichia coli K12 and O157.</title>
        <authorList>
            <person name="Jin Q."/>
            <person name="Yuan Z."/>
            <person name="Xu J."/>
            <person name="Wang Y."/>
            <person name="Shen Y."/>
            <person name="Lu W."/>
            <person name="Wang J."/>
            <person name="Liu H."/>
            <person name="Yang J."/>
            <person name="Yang F."/>
            <person name="Zhang X."/>
            <person name="Zhang J."/>
            <person name="Yang G."/>
            <person name="Wu H."/>
            <person name="Qu D."/>
            <person name="Dong J."/>
            <person name="Sun L."/>
            <person name="Xue Y."/>
            <person name="Zhao A."/>
            <person name="Gao Y."/>
            <person name="Zhu J."/>
            <person name="Kan B."/>
            <person name="Ding K."/>
            <person name="Chen S."/>
            <person name="Cheng H."/>
            <person name="Yao Z."/>
            <person name="He B."/>
            <person name="Chen R."/>
            <person name="Ma D."/>
            <person name="Qiang B."/>
            <person name="Wen Y."/>
            <person name="Hou Y."/>
            <person name="Yu J."/>
        </authorList>
    </citation>
    <scope>NUCLEOTIDE SEQUENCE [LARGE SCALE GENOMIC DNA]</scope>
    <source>
        <strain>301 / Serotype 2a</strain>
    </source>
</reference>
<reference key="2">
    <citation type="journal article" date="2003" name="Infect. Immun.">
        <title>Complete genome sequence and comparative genomics of Shigella flexneri serotype 2a strain 2457T.</title>
        <authorList>
            <person name="Wei J."/>
            <person name="Goldberg M.B."/>
            <person name="Burland V."/>
            <person name="Venkatesan M.M."/>
            <person name="Deng W."/>
            <person name="Fournier G."/>
            <person name="Mayhew G.F."/>
            <person name="Plunkett G. III"/>
            <person name="Rose D.J."/>
            <person name="Darling A."/>
            <person name="Mau B."/>
            <person name="Perna N.T."/>
            <person name="Payne S.M."/>
            <person name="Runyen-Janecky L.J."/>
            <person name="Zhou S."/>
            <person name="Schwartz D.C."/>
            <person name="Blattner F.R."/>
        </authorList>
    </citation>
    <scope>NUCLEOTIDE SEQUENCE [LARGE SCALE GENOMIC DNA]</scope>
    <source>
        <strain>ATCC 700930 / 2457T / Serotype 2a</strain>
    </source>
</reference>
<organism>
    <name type="scientific">Shigella flexneri</name>
    <dbReference type="NCBI Taxonomy" id="623"/>
    <lineage>
        <taxon>Bacteria</taxon>
        <taxon>Pseudomonadati</taxon>
        <taxon>Pseudomonadota</taxon>
        <taxon>Gammaproteobacteria</taxon>
        <taxon>Enterobacterales</taxon>
        <taxon>Enterobacteriaceae</taxon>
        <taxon>Shigella</taxon>
    </lineage>
</organism>
<feature type="chain" id="PRO_0000177091" description="Translational regulator CsrA">
    <location>
        <begin position="1"/>
        <end position="61"/>
    </location>
</feature>
<comment type="function">
    <text evidence="1">A key translational regulator that binds mRNA to regulate translation initiation and/or mRNA stability. Mediates global changes in gene expression, shifting from rapid growth to stress survival by linking envelope stress, the stringent response and the catabolite repression systems. Usually binds in the 5'-UTR; binding at or near the Shine-Dalgarno sequence prevents ribosome-binding, repressing translation, binding elsewhere in the 5'-UTR can activate translation and/or stabilize the mRNA. Its function is antagonized by small RNA(s).</text>
</comment>
<comment type="subunit">
    <text evidence="1">Homodimer; the beta-strands of each monomer intercalate to form a hydrophobic core, while the alpha-helices form wings that extend away from the core.</text>
</comment>
<comment type="subcellular location">
    <subcellularLocation>
        <location evidence="1">Cytoplasm</location>
    </subcellularLocation>
</comment>
<comment type="similarity">
    <text evidence="1">Belongs to the CsrA/RsmA family.</text>
</comment>
<evidence type="ECO:0000255" key="1">
    <source>
        <dbReference type="HAMAP-Rule" id="MF_00167"/>
    </source>
</evidence>
<name>CSRA_SHIFL</name>
<protein>
    <recommendedName>
        <fullName evidence="1">Translational regulator CsrA</fullName>
    </recommendedName>
    <alternativeName>
        <fullName evidence="1">Carbon storage regulator</fullName>
    </alternativeName>
</protein>